<evidence type="ECO:0000255" key="1">
    <source>
        <dbReference type="HAMAP-Rule" id="MF_00365"/>
    </source>
</evidence>
<protein>
    <recommendedName>
        <fullName evidence="1">DNA replication and repair protein RecF</fullName>
    </recommendedName>
</protein>
<keyword id="KW-0067">ATP-binding</keyword>
<keyword id="KW-0963">Cytoplasm</keyword>
<keyword id="KW-0227">DNA damage</keyword>
<keyword id="KW-0234">DNA repair</keyword>
<keyword id="KW-0235">DNA replication</keyword>
<keyword id="KW-0238">DNA-binding</keyword>
<keyword id="KW-0547">Nucleotide-binding</keyword>
<keyword id="KW-0742">SOS response</keyword>
<dbReference type="EMBL" id="CP000051">
    <property type="protein sequence ID" value="AAX50325.1"/>
    <property type="molecule type" value="Genomic_DNA"/>
</dbReference>
<dbReference type="RefSeq" id="WP_011324552.1">
    <property type="nucleotide sequence ID" value="NC_007429.1"/>
</dbReference>
<dbReference type="SMR" id="Q3KMU7"/>
<dbReference type="KEGG" id="cta:CTA_0079"/>
<dbReference type="HOGENOM" id="CLU_040267_0_1_0"/>
<dbReference type="Proteomes" id="UP000002532">
    <property type="component" value="Chromosome"/>
</dbReference>
<dbReference type="GO" id="GO:0005737">
    <property type="term" value="C:cytoplasm"/>
    <property type="evidence" value="ECO:0007669"/>
    <property type="project" value="UniProtKB-SubCell"/>
</dbReference>
<dbReference type="GO" id="GO:0005524">
    <property type="term" value="F:ATP binding"/>
    <property type="evidence" value="ECO:0007669"/>
    <property type="project" value="UniProtKB-UniRule"/>
</dbReference>
<dbReference type="GO" id="GO:0003697">
    <property type="term" value="F:single-stranded DNA binding"/>
    <property type="evidence" value="ECO:0007669"/>
    <property type="project" value="UniProtKB-UniRule"/>
</dbReference>
<dbReference type="GO" id="GO:0006260">
    <property type="term" value="P:DNA replication"/>
    <property type="evidence" value="ECO:0007669"/>
    <property type="project" value="UniProtKB-UniRule"/>
</dbReference>
<dbReference type="GO" id="GO:0000731">
    <property type="term" value="P:DNA synthesis involved in DNA repair"/>
    <property type="evidence" value="ECO:0007669"/>
    <property type="project" value="TreeGrafter"/>
</dbReference>
<dbReference type="GO" id="GO:0006302">
    <property type="term" value="P:double-strand break repair"/>
    <property type="evidence" value="ECO:0007669"/>
    <property type="project" value="TreeGrafter"/>
</dbReference>
<dbReference type="GO" id="GO:0009432">
    <property type="term" value="P:SOS response"/>
    <property type="evidence" value="ECO:0007669"/>
    <property type="project" value="UniProtKB-UniRule"/>
</dbReference>
<dbReference type="Gene3D" id="3.40.50.300">
    <property type="entry name" value="P-loop containing nucleotide triphosphate hydrolases"/>
    <property type="match status" value="1"/>
</dbReference>
<dbReference type="Gene3D" id="1.20.1050.90">
    <property type="entry name" value="RecF/RecN/SMC, N-terminal domain"/>
    <property type="match status" value="1"/>
</dbReference>
<dbReference type="HAMAP" id="MF_00365">
    <property type="entry name" value="RecF"/>
    <property type="match status" value="1"/>
</dbReference>
<dbReference type="InterPro" id="IPR001238">
    <property type="entry name" value="DNA-binding_RecF"/>
</dbReference>
<dbReference type="InterPro" id="IPR018078">
    <property type="entry name" value="DNA-binding_RecF_CS"/>
</dbReference>
<dbReference type="InterPro" id="IPR027417">
    <property type="entry name" value="P-loop_NTPase"/>
</dbReference>
<dbReference type="InterPro" id="IPR003395">
    <property type="entry name" value="RecF/RecN/SMC_N"/>
</dbReference>
<dbReference type="InterPro" id="IPR042174">
    <property type="entry name" value="RecF_2"/>
</dbReference>
<dbReference type="NCBIfam" id="TIGR00611">
    <property type="entry name" value="recf"/>
    <property type="match status" value="1"/>
</dbReference>
<dbReference type="PANTHER" id="PTHR32182">
    <property type="entry name" value="DNA REPLICATION AND REPAIR PROTEIN RECF"/>
    <property type="match status" value="1"/>
</dbReference>
<dbReference type="PANTHER" id="PTHR32182:SF0">
    <property type="entry name" value="DNA REPLICATION AND REPAIR PROTEIN RECF"/>
    <property type="match status" value="1"/>
</dbReference>
<dbReference type="Pfam" id="PF02463">
    <property type="entry name" value="SMC_N"/>
    <property type="match status" value="1"/>
</dbReference>
<dbReference type="SUPFAM" id="SSF52540">
    <property type="entry name" value="P-loop containing nucleoside triphosphate hydrolases"/>
    <property type="match status" value="1"/>
</dbReference>
<dbReference type="PROSITE" id="PS00617">
    <property type="entry name" value="RECF_1"/>
    <property type="match status" value="1"/>
</dbReference>
<dbReference type="PROSITE" id="PS00618">
    <property type="entry name" value="RECF_2"/>
    <property type="match status" value="1"/>
</dbReference>
<organism>
    <name type="scientific">Chlamydia trachomatis serovar A (strain ATCC VR-571B / DSM 19440 / HAR-13)</name>
    <dbReference type="NCBI Taxonomy" id="315277"/>
    <lineage>
        <taxon>Bacteria</taxon>
        <taxon>Pseudomonadati</taxon>
        <taxon>Chlamydiota</taxon>
        <taxon>Chlamydiia</taxon>
        <taxon>Chlamydiales</taxon>
        <taxon>Chlamydiaceae</taxon>
        <taxon>Chlamydia/Chlamydophila group</taxon>
        <taxon>Chlamydia</taxon>
    </lineage>
</organism>
<feature type="chain" id="PRO_0000236114" description="DNA replication and repair protein RecF">
    <location>
        <begin position="1"/>
        <end position="365"/>
    </location>
</feature>
<feature type="binding site" evidence="1">
    <location>
        <begin position="30"/>
        <end position="37"/>
    </location>
    <ligand>
        <name>ATP</name>
        <dbReference type="ChEBI" id="CHEBI:30616"/>
    </ligand>
</feature>
<sequence>MRVLSLFLKDFRNYTDLRLELGPEMNSIFGLNAQGKTNLLEALYILSLGRSFRTSRLTDAIRFGASHFFIEAVFSHKEVFHTLSIQVDKKGKKILFDGAPITKLSELVGLFPVILFSIKDIAIIEGSPSERRRFLDLLLAQASDKYTEHISLYHKALDQRNASIKAQNQKAISAWNSPLIAYGSLVAFLRNECTKKLNTIFQTLWDNTLKETLSLRYESSLITEESPTLNDIASNYYEQLRIANTKDLDLGYTMVGPHRDELLLTINDLPVAKFSSEGQKHSLLAVLRFAECVYLQEEFCIHPILCMDDIHACLDQQRLDQLLQLSNSLGQVVTTSTICPDHRSTTSCIFHVTQAQVSLVAPQSL</sequence>
<comment type="function">
    <text evidence="1">The RecF protein is involved in DNA metabolism; it is required for DNA replication and normal SOS inducibility. RecF binds preferentially to single-stranded, linear DNA. It also seems to bind ATP.</text>
</comment>
<comment type="subcellular location">
    <subcellularLocation>
        <location evidence="1">Cytoplasm</location>
    </subcellularLocation>
</comment>
<comment type="similarity">
    <text evidence="1">Belongs to the RecF family.</text>
</comment>
<proteinExistence type="inferred from homology"/>
<gene>
    <name evidence="1" type="primary">recF</name>
    <name type="ordered locus">CTA_0079</name>
</gene>
<name>RECF_CHLTA</name>
<reference key="1">
    <citation type="journal article" date="2005" name="Infect. Immun.">
        <title>Comparative genomic analysis of Chlamydia trachomatis oculotropic and genitotropic strains.</title>
        <authorList>
            <person name="Carlson J.H."/>
            <person name="Porcella S.F."/>
            <person name="McClarty G."/>
            <person name="Caldwell H.D."/>
        </authorList>
    </citation>
    <scope>NUCLEOTIDE SEQUENCE [LARGE SCALE GENOMIC DNA]</scope>
    <source>
        <strain>ATCC VR-571B / DSM 19440 / HAR-13</strain>
    </source>
</reference>
<accession>Q3KMU7</accession>